<name>YO046_YEAST</name>
<organism>
    <name type="scientific">Saccharomyces cerevisiae (strain ATCC 204508 / S288c)</name>
    <name type="common">Baker's yeast</name>
    <dbReference type="NCBI Taxonomy" id="559292"/>
    <lineage>
        <taxon>Eukaryota</taxon>
        <taxon>Fungi</taxon>
        <taxon>Dikarya</taxon>
        <taxon>Ascomycota</taxon>
        <taxon>Saccharomycotina</taxon>
        <taxon>Saccharomycetes</taxon>
        <taxon>Saccharomycetales</taxon>
        <taxon>Saccharomycetaceae</taxon>
        <taxon>Saccharomyces</taxon>
    </lineage>
</organism>
<proteinExistence type="uncertain"/>
<reference key="1">
    <citation type="journal article" date="1997" name="Nature">
        <title>The nucleotide sequence of Saccharomyces cerevisiae chromosome XV.</title>
        <authorList>
            <person name="Dujon B."/>
            <person name="Albermann K."/>
            <person name="Aldea M."/>
            <person name="Alexandraki D."/>
            <person name="Ansorge W."/>
            <person name="Arino J."/>
            <person name="Benes V."/>
            <person name="Bohn C."/>
            <person name="Bolotin-Fukuhara M."/>
            <person name="Bordonne R."/>
            <person name="Boyer J."/>
            <person name="Camasses A."/>
            <person name="Casamayor A."/>
            <person name="Casas C."/>
            <person name="Cheret G."/>
            <person name="Cziepluch C."/>
            <person name="Daignan-Fornier B."/>
            <person name="Dang V.-D."/>
            <person name="de Haan M."/>
            <person name="Delius H."/>
            <person name="Durand P."/>
            <person name="Fairhead C."/>
            <person name="Feldmann H."/>
            <person name="Gaillon L."/>
            <person name="Galisson F."/>
            <person name="Gamo F.-J."/>
            <person name="Gancedo C."/>
            <person name="Goffeau A."/>
            <person name="Goulding S.E."/>
            <person name="Grivell L.A."/>
            <person name="Habbig B."/>
            <person name="Hand N.J."/>
            <person name="Hani J."/>
            <person name="Hattenhorst U."/>
            <person name="Hebling U."/>
            <person name="Hernando Y."/>
            <person name="Herrero E."/>
            <person name="Heumann K."/>
            <person name="Hiesel R."/>
            <person name="Hilger F."/>
            <person name="Hofmann B."/>
            <person name="Hollenberg C.P."/>
            <person name="Hughes B."/>
            <person name="Jauniaux J.-C."/>
            <person name="Kalogeropoulos A."/>
            <person name="Katsoulou C."/>
            <person name="Kordes E."/>
            <person name="Lafuente M.J."/>
            <person name="Landt O."/>
            <person name="Louis E.J."/>
            <person name="Maarse A.C."/>
            <person name="Madania A."/>
            <person name="Mannhaupt G."/>
            <person name="Marck C."/>
            <person name="Martin R.P."/>
            <person name="Mewes H.-W."/>
            <person name="Michaux G."/>
            <person name="Paces V."/>
            <person name="Parle-McDermott A.G."/>
            <person name="Pearson B.M."/>
            <person name="Perrin A."/>
            <person name="Pettersson B."/>
            <person name="Poch O."/>
            <person name="Pohl T.M."/>
            <person name="Poirey R."/>
            <person name="Portetelle D."/>
            <person name="Pujol A."/>
            <person name="Purnelle B."/>
            <person name="Ramezani Rad M."/>
            <person name="Rechmann S."/>
            <person name="Schwager C."/>
            <person name="Schweizer M."/>
            <person name="Sor F."/>
            <person name="Sterky F."/>
            <person name="Tarassov I.A."/>
            <person name="Teodoru C."/>
            <person name="Tettelin H."/>
            <person name="Thierry A."/>
            <person name="Tobiasch E."/>
            <person name="Tzermia M."/>
            <person name="Uhlen M."/>
            <person name="Unseld M."/>
            <person name="Valens M."/>
            <person name="Vandenbol M."/>
            <person name="Vetter I."/>
            <person name="Vlcek C."/>
            <person name="Voet M."/>
            <person name="Volckaert G."/>
            <person name="Voss H."/>
            <person name="Wambutt R."/>
            <person name="Wedler H."/>
            <person name="Wiemann S."/>
            <person name="Winsor B."/>
            <person name="Wolfe K.H."/>
            <person name="Zollner A."/>
            <person name="Zumstein E."/>
            <person name="Kleine K."/>
        </authorList>
    </citation>
    <scope>NUCLEOTIDE SEQUENCE [LARGE SCALE GENOMIC DNA]</scope>
    <source>
        <strain>ATCC 204508 / S288c</strain>
    </source>
</reference>
<reference key="2">
    <citation type="journal article" date="2014" name="G3 (Bethesda)">
        <title>The reference genome sequence of Saccharomyces cerevisiae: Then and now.</title>
        <authorList>
            <person name="Engel S.R."/>
            <person name="Dietrich F.S."/>
            <person name="Fisk D.G."/>
            <person name="Binkley G."/>
            <person name="Balakrishnan R."/>
            <person name="Costanzo M.C."/>
            <person name="Dwight S.S."/>
            <person name="Hitz B.C."/>
            <person name="Karra K."/>
            <person name="Nash R.S."/>
            <person name="Weng S."/>
            <person name="Wong E.D."/>
            <person name="Lloyd P."/>
            <person name="Skrzypek M.S."/>
            <person name="Miyasato S.R."/>
            <person name="Simison M."/>
            <person name="Cherry J.M."/>
        </authorList>
    </citation>
    <scope>GENOME REANNOTATION</scope>
    <source>
        <strain>ATCC 204508 / S288c</strain>
    </source>
</reference>
<reference key="3">
    <citation type="journal article" date="2007" name="Genome Res.">
        <title>Approaching a complete repository of sequence-verified protein-encoding clones for Saccharomyces cerevisiae.</title>
        <authorList>
            <person name="Hu Y."/>
            <person name="Rolfs A."/>
            <person name="Bhullar B."/>
            <person name="Murthy T.V.S."/>
            <person name="Zhu C."/>
            <person name="Berger M.F."/>
            <person name="Camargo A.A."/>
            <person name="Kelley F."/>
            <person name="McCarron S."/>
            <person name="Jepson D."/>
            <person name="Richardson A."/>
            <person name="Raphael J."/>
            <person name="Moreira D."/>
            <person name="Taycher E."/>
            <person name="Zuo D."/>
            <person name="Mohr S."/>
            <person name="Kane M.F."/>
            <person name="Williamson J."/>
            <person name="Simpson A.J.G."/>
            <person name="Bulyk M.L."/>
            <person name="Harlow E."/>
            <person name="Marsischky G."/>
            <person name="Kolodner R.D."/>
            <person name="LaBaer J."/>
        </authorList>
    </citation>
    <scope>NUCLEOTIDE SEQUENCE [GENOMIC DNA]</scope>
    <source>
        <strain>ATCC 204508 / S288c</strain>
    </source>
</reference>
<comment type="miscellaneous">
    <text evidence="1">Almost completely overlaps YOL045W.</text>
</comment>
<comment type="caution">
    <text evidence="2">Product of a dubious gene prediction unlikely to encode a functional protein. Because of that it is not part of the S.cerevisiae S288c complete/reference proteome set.</text>
</comment>
<protein>
    <recommendedName>
        <fullName>Putative uncharacterized protein YOL046C</fullName>
    </recommendedName>
</protein>
<accession>Q08216</accession>
<gene>
    <name type="ordered locus">YOL046C</name>
    <name type="ORF">O2030</name>
</gene>
<feature type="chain" id="PRO_0000299690" description="Putative uncharacterized protein YOL046C">
    <location>
        <begin position="1"/>
        <end position="224"/>
    </location>
</feature>
<dbReference type="EMBL" id="Z74788">
    <property type="protein sequence ID" value="CAA99050.1"/>
    <property type="molecule type" value="Genomic_DNA"/>
</dbReference>
<dbReference type="EMBL" id="AY693367">
    <property type="protein sequence ID" value="AAT93386.1"/>
    <property type="molecule type" value="Genomic_DNA"/>
</dbReference>
<dbReference type="PIR" id="S66731">
    <property type="entry name" value="S66731"/>
</dbReference>
<dbReference type="DIP" id="DIP-4738N"/>
<dbReference type="IntAct" id="Q08216">
    <property type="interactions" value="1"/>
</dbReference>
<dbReference type="MINT" id="Q08216"/>
<dbReference type="PaxDb" id="4932-YOL046C"/>
<dbReference type="EnsemblFungi" id="YOL046C_mRNA">
    <property type="protein sequence ID" value="YOL046C"/>
    <property type="gene ID" value="YOL046C"/>
</dbReference>
<dbReference type="AGR" id="SGD:S000005406"/>
<dbReference type="SGD" id="S000005406">
    <property type="gene designation" value="YOL046C"/>
</dbReference>
<dbReference type="HOGENOM" id="CLU_1316328_0_0_1"/>
<dbReference type="OMA" id="LYENACG"/>
<sequence length="224" mass="24106">MSESKFIFLIFNNDSMCKSEALSKELFSNAKFSKNNKFSNSDLAGFSLLAVSLSGNTIKDVALCITGLLAGDGILDTNGEIRDPFNGSRDADNVAVSVKFLVCLSEGGYAITGAFFFNSCKMSGLFTIISKDLLKMVNLTPSEFGDMGLYENACGDSLGTATRSERSSSLNVDENESTDEEACWYKHGGLESPTNGVFLEYEMSAGAAALTGYVIVFFVYDSLL</sequence>
<evidence type="ECO:0000305" key="1"/>
<evidence type="ECO:0000305" key="2">
    <source>
    </source>
</evidence>